<keyword id="KW-0521">NADP</keyword>
<keyword id="KW-0560">Oxidoreductase</keyword>
<feature type="chain" id="PRO_0000448826" description="Short chain dehydrogenases/reductase notP'">
    <location>
        <begin position="1"/>
        <end position="292"/>
    </location>
</feature>
<feature type="region of interest" description="Disordered" evidence="3">
    <location>
        <begin position="1"/>
        <end position="25"/>
    </location>
</feature>
<feature type="active site" description="Proton donor" evidence="2">
    <location>
        <position position="193"/>
    </location>
</feature>
<feature type="active site" description="Lowers pKa of active site Tyr" evidence="2">
    <location>
        <position position="197"/>
    </location>
</feature>
<feature type="binding site" evidence="1">
    <location>
        <position position="48"/>
    </location>
    <ligand>
        <name>NADP(+)</name>
        <dbReference type="ChEBI" id="CHEBI:58349"/>
    </ligand>
</feature>
<feature type="binding site" evidence="1">
    <location>
        <position position="97"/>
    </location>
    <ligand>
        <name>NADP(+)</name>
        <dbReference type="ChEBI" id="CHEBI:58349"/>
    </ligand>
</feature>
<feature type="binding site" evidence="1">
    <location>
        <position position="158"/>
    </location>
    <ligand>
        <name>NADP(+)</name>
        <dbReference type="ChEBI" id="CHEBI:58349"/>
    </ligand>
</feature>
<feature type="binding site" evidence="2">
    <location>
        <position position="193"/>
    </location>
    <ligand>
        <name>NADP(+)</name>
        <dbReference type="ChEBI" id="CHEBI:58349"/>
    </ligand>
</feature>
<feature type="binding site" evidence="2">
    <location>
        <position position="197"/>
    </location>
    <ligand>
        <name>NADP(+)</name>
        <dbReference type="ChEBI" id="CHEBI:58349"/>
    </ligand>
</feature>
<feature type="binding site" evidence="2">
    <location>
        <position position="230"/>
    </location>
    <ligand>
        <name>NADP(+)</name>
        <dbReference type="ChEBI" id="CHEBI:58349"/>
    </ligand>
</feature>
<feature type="binding site" evidence="1">
    <location>
        <position position="232"/>
    </location>
    <ligand>
        <name>NADP(+)</name>
        <dbReference type="ChEBI" id="CHEBI:58349"/>
    </ligand>
</feature>
<proteinExistence type="evidence at protein level"/>
<evidence type="ECO:0000250" key="1">
    <source>
        <dbReference type="UniProtKB" id="L0E2Z4"/>
    </source>
</evidence>
<evidence type="ECO:0000250" key="2">
    <source>
        <dbReference type="UniProtKB" id="O93868"/>
    </source>
</evidence>
<evidence type="ECO:0000256" key="3">
    <source>
        <dbReference type="SAM" id="MobiDB-lite"/>
    </source>
</evidence>
<evidence type="ECO:0000269" key="4">
    <source>
    </source>
</evidence>
<evidence type="ECO:0000269" key="5">
    <source>
    </source>
</evidence>
<evidence type="ECO:0000269" key="6">
    <source>
    </source>
</evidence>
<evidence type="ECO:0000303" key="7">
    <source>
    </source>
</evidence>
<evidence type="ECO:0000305" key="8"/>
<evidence type="ECO:0000305" key="9">
    <source>
    </source>
</evidence>
<name>NOTP_ASPVE</name>
<reference key="1">
    <citation type="journal article" date="2012" name="Med. Chem. Commun.">
        <title>Comparative analysis of the biosynthetic systems for fungal bicyclo[2.2.2]diazaoctane indole alkaloids: the (+)/(-)-notoamide, paraherquamide and malbrancheamide pathways.</title>
        <authorList>
            <person name="Li S."/>
            <person name="Anand K."/>
            <person name="Tran H."/>
            <person name="Yu F."/>
            <person name="Finefield J.M."/>
            <person name="Sunderhaus J.D."/>
            <person name="McAfoos T.J."/>
            <person name="Tsukamoto S."/>
            <person name="Williams R.M."/>
            <person name="Sherman D.H."/>
        </authorList>
    </citation>
    <scope>NUCLEOTIDE SEQUENCE [GENOMIC DNA]</scope>
    <source>
        <strain>NRRL 35600</strain>
    </source>
</reference>
<reference key="2">
    <citation type="journal article" date="2007" name="Angew. Chem. Int. Ed.">
        <title>Notoamides A-D: prenylated indole alkaloids isolated from a marine-derived fungus, Aspergillus sp.</title>
        <authorList>
            <person name="Kato H."/>
            <person name="Yoshida T."/>
            <person name="Tokue T."/>
            <person name="Nojiri Y."/>
            <person name="Hirota H."/>
            <person name="Ohta T."/>
            <person name="Williams R.M."/>
            <person name="Tsukamoto S."/>
        </authorList>
    </citation>
    <scope>BIOTECHNOLOGY</scope>
</reference>
<reference key="3">
    <citation type="journal article" date="2013" name="Appl. Microbiol. Biotechnol.">
        <title>Identification of a brevianamide F reverse prenyltransferase BrePT from Aspergillus versicolor with a broad substrate specificity towards tryptophan-containing cyclic dipeptides.</title>
        <authorList>
            <person name="Yin S."/>
            <person name="Yu X."/>
            <person name="Wang Q."/>
            <person name="Liu X.Q."/>
            <person name="Li S.M."/>
        </authorList>
    </citation>
    <scope>FUNCTION</scope>
</reference>
<dbReference type="EC" id="1.1.1.-" evidence="8"/>
<dbReference type="EMBL" id="JQ708194">
    <property type="protein sequence ID" value="AGC83587.1"/>
    <property type="molecule type" value="Genomic_DNA"/>
</dbReference>
<dbReference type="SMR" id="L7WRR9"/>
<dbReference type="VEuPathDB" id="FungiDB:ASPVEDRAFT_877678"/>
<dbReference type="GO" id="GO:0050664">
    <property type="term" value="F:oxidoreductase activity, acting on NAD(P)H, oxygen as acceptor"/>
    <property type="evidence" value="ECO:0007669"/>
    <property type="project" value="TreeGrafter"/>
</dbReference>
<dbReference type="GO" id="GO:0016616">
    <property type="term" value="F:oxidoreductase activity, acting on the CH-OH group of donors, NAD or NADP as acceptor"/>
    <property type="evidence" value="ECO:0007669"/>
    <property type="project" value="UniProtKB-ARBA"/>
</dbReference>
<dbReference type="GO" id="GO:0044550">
    <property type="term" value="P:secondary metabolite biosynthetic process"/>
    <property type="evidence" value="ECO:0007669"/>
    <property type="project" value="UniProtKB-ARBA"/>
</dbReference>
<dbReference type="Gene3D" id="3.40.50.720">
    <property type="entry name" value="NAD(P)-binding Rossmann-like Domain"/>
    <property type="match status" value="1"/>
</dbReference>
<dbReference type="InterPro" id="IPR036291">
    <property type="entry name" value="NAD(P)-bd_dom_sf"/>
</dbReference>
<dbReference type="InterPro" id="IPR020904">
    <property type="entry name" value="Sc_DH/Rdtase_CS"/>
</dbReference>
<dbReference type="InterPro" id="IPR002347">
    <property type="entry name" value="SDR_fam"/>
</dbReference>
<dbReference type="PANTHER" id="PTHR43008">
    <property type="entry name" value="BENZIL REDUCTASE"/>
    <property type="match status" value="1"/>
</dbReference>
<dbReference type="PANTHER" id="PTHR43008:SF4">
    <property type="entry name" value="CHAIN DEHYDROGENASE, PUTATIVE (AFU_ORTHOLOGUE AFUA_4G08710)-RELATED"/>
    <property type="match status" value="1"/>
</dbReference>
<dbReference type="Pfam" id="PF13561">
    <property type="entry name" value="adh_short_C2"/>
    <property type="match status" value="1"/>
</dbReference>
<dbReference type="PRINTS" id="PR00081">
    <property type="entry name" value="GDHRDH"/>
</dbReference>
<dbReference type="SUPFAM" id="SSF51735">
    <property type="entry name" value="NAD(P)-binding Rossmann-fold domains"/>
    <property type="match status" value="1"/>
</dbReference>
<dbReference type="PROSITE" id="PS00061">
    <property type="entry name" value="ADH_SHORT"/>
    <property type="match status" value="1"/>
</dbReference>
<comment type="function">
    <text evidence="5 6 9">Short chain dehydrogenases/reductase; part of the gene cluster that mediates the biosynthesis of notoamide, a fungal indole alkaloid that belongs to a family of natural products containing a characteristic bicyclo[2.2.2]diazaoctane core (PubMed:23213353). The first step of notoamide biosynthesis involves coupling of L-proline and L-tryptophan by the bimodular NRPS notE', to produce cyclo-L-tryptophan-L-proline called brevianamide F (Probable). The reverse prenyltransferase notF' then acts as a deoxybrevianamide E synthase and converts brevianamide F to deoxybrevianamide E via reverse prenylation at C-2 of the indole ring leading to the bicyclo[2.2.2]diazaoctane core (Probable) (PubMed:22660767). Deoxybrevianamide E is further hydroxylated at C-6 of the indole ring, likely catalyzed by the cytochrome P450 monooxygenase notG', to yield 6-hydroxy-deoxybrevianamide E (Probable). 6-hydroxy-deoxybrevianamide E is a specific substrate of the prenyltransferase notC' for normal prenylation at C-7 to produce 6-hydroxy-7-prenyl-deoxybrevianamide, also called notoamide S (Probable). As the proposed pivotal branching point in notoamide biosynthesis, notoamide S can be diverted to notoamide E through an oxidative pyran ring closure putatively catalyzed by either notH' cytochrome P450 monooxygenase or the notD' FAD-linked oxidoreductase (Probable). This step would be followed by an indole 2,3-epoxidation-initiated pinacol-like rearrangement catalyzed by the notB' FAD-dependent monooxygenase leading to the formation of notoamide C and notoamide D (Probable). On the other hand notoamide S is converted to notoamide T by notH' (or notD'), a bifunctional oxidase that also functions as the intramolecular Diels-Alderase responsible for generation of (-)-notoamide T (Probable). To generate antipodal (+)-notoaminide T, notH (or notD) in Aspergillus strain MF297-2 is expected to catalyze a Diels-Alder reaction leading to the opposite stereochemistry (Probable). The remaining oxidoreductase notD' (or notH') likely catalyzes the oxidative pyran ring formation to yield (-)-stephacidin A (Probable). The FAD-dependent monooxygenase notI' is highly similar to notB' and is predicted to catalyze a similar conversion from (-)-stephacidin A to (+)-notoamide B via the 2,3-epoxidation of (-)-stephacidin A followed by a pinacol-type rearrangement (Probable). Finally, it remains unclear which enzyme could be responsible for the final hydroxylation steps leading to notoamide A and sclerotiamide (Probable). The function of notP' in the notoamide biosynthesis has not been determined yet (Probable).</text>
</comment>
<comment type="biotechnology">
    <text evidence="4">Notoamides have been shown to exhibit antitumoral activities (PubMed:17304611). Notoamides A-C show moderate cytotoxicity against HeLa and L1210 cells with IC(50) values in the range of 22-52 mg/ml, but the IC(50) value of notoamide D is greater than 100 mg/ml (PubMed:17304611). Moreover, notoamide C induces G2/M-cell cycle arrest at a concentration of 6.3 mg/ml (PubMed:17304611).</text>
</comment>
<comment type="similarity">
    <text evidence="8">Belongs to the short-chain dehydrogenases/reductases (SDR) family.</text>
</comment>
<accession>L7WRR9</accession>
<gene>
    <name evidence="7" type="primary">notP'</name>
</gene>
<sequence length="292" mass="31222">MPQTSDGNVHAPQYREAKPSQGDPSLSVSQLFRLDNRTIIITGATGFLGSTLAIAILESGADVVCLDLPPTPTAENWNDVKTTASRHEQQLSYYQLDVTDEDAVADTFAKFLPTLRYPVRGLVTCAGLSLNGPSSEFPASAFRKVLDINVTGTFLVAKATARAMISANTTGSMVFVASMSGYGANKGVDTAGYNSSKAAVHQLTRSLAAEWGSRVGLPLIRVNSLSPGYIRTAATAEALQKPGMEDQWTGDNMLYRLSRVDEFRAPVLFMLGDGSSFMTGADLRVDGGHCSW</sequence>
<protein>
    <recommendedName>
        <fullName evidence="7">Short chain dehydrogenases/reductase notP'</fullName>
        <ecNumber evidence="8">1.1.1.-</ecNumber>
    </recommendedName>
    <alternativeName>
        <fullName evidence="7">Notoamide biosynthesis cluster protein P'</fullName>
    </alternativeName>
</protein>
<organism>
    <name type="scientific">Aspergillus versicolor</name>
    <dbReference type="NCBI Taxonomy" id="46472"/>
    <lineage>
        <taxon>Eukaryota</taxon>
        <taxon>Fungi</taxon>
        <taxon>Dikarya</taxon>
        <taxon>Ascomycota</taxon>
        <taxon>Pezizomycotina</taxon>
        <taxon>Eurotiomycetes</taxon>
        <taxon>Eurotiomycetidae</taxon>
        <taxon>Eurotiales</taxon>
        <taxon>Aspergillaceae</taxon>
        <taxon>Aspergillus</taxon>
        <taxon>Aspergillus subgen. Nidulantes</taxon>
    </lineage>
</organism>